<dbReference type="EMBL" id="AF237915">
    <property type="protein sequence ID" value="AAK37598.1"/>
    <property type="molecule type" value="mRNA"/>
</dbReference>
<dbReference type="EMBL" id="BC069842">
    <property type="protein sequence ID" value="AAH69842.1"/>
    <property type="molecule type" value="mRNA"/>
</dbReference>
<dbReference type="CCDS" id="CCDS29602.1"/>
<dbReference type="RefSeq" id="NP_079934.2">
    <property type="nucleotide sequence ID" value="NM_025658.4"/>
</dbReference>
<dbReference type="SMR" id="Q99N05"/>
<dbReference type="FunCoup" id="Q99N05">
    <property type="interactions" value="123"/>
</dbReference>
<dbReference type="STRING" id="10090.ENSMUSP00000025581"/>
<dbReference type="SwissPalm" id="Q99N05"/>
<dbReference type="PaxDb" id="10090-ENSMUSP00000025581"/>
<dbReference type="ProteomicsDB" id="295755"/>
<dbReference type="DNASU" id="66607"/>
<dbReference type="Ensembl" id="ENSMUST00000025581.7">
    <property type="protein sequence ID" value="ENSMUSP00000025581.7"/>
    <property type="gene ID" value="ENSMUSG00000024678.7"/>
</dbReference>
<dbReference type="GeneID" id="66607"/>
<dbReference type="KEGG" id="mmu:66607"/>
<dbReference type="UCSC" id="uc008gsl.1">
    <property type="organism name" value="mouse"/>
</dbReference>
<dbReference type="AGR" id="MGI:1913857"/>
<dbReference type="CTD" id="66607"/>
<dbReference type="MGI" id="MGI:1913857">
    <property type="gene designation" value="Ms4a4d"/>
</dbReference>
<dbReference type="VEuPathDB" id="HostDB:ENSMUSG00000024678"/>
<dbReference type="eggNOG" id="ENOG502S3XD">
    <property type="taxonomic scope" value="Eukaryota"/>
</dbReference>
<dbReference type="GeneTree" id="ENSGT00940000155376"/>
<dbReference type="HOGENOM" id="CLU_091032_3_1_1"/>
<dbReference type="InParanoid" id="Q99N05"/>
<dbReference type="OMA" id="ILECCIA"/>
<dbReference type="OrthoDB" id="10071849at2759"/>
<dbReference type="PhylomeDB" id="Q99N05"/>
<dbReference type="TreeFam" id="TF335157"/>
<dbReference type="BioGRID-ORCS" id="66607">
    <property type="hits" value="4 hits in 77 CRISPR screens"/>
</dbReference>
<dbReference type="ChiTaRS" id="Ms4a4d">
    <property type="organism name" value="mouse"/>
</dbReference>
<dbReference type="PRO" id="PR:Q99N05"/>
<dbReference type="Proteomes" id="UP000000589">
    <property type="component" value="Chromosome 19"/>
</dbReference>
<dbReference type="RNAct" id="Q99N05">
    <property type="molecule type" value="protein"/>
</dbReference>
<dbReference type="Bgee" id="ENSMUSG00000024678">
    <property type="expression patterns" value="Expressed in paneth cell and 127 other cell types or tissues"/>
</dbReference>
<dbReference type="GO" id="GO:0016020">
    <property type="term" value="C:membrane"/>
    <property type="evidence" value="ECO:0007669"/>
    <property type="project" value="UniProtKB-SubCell"/>
</dbReference>
<dbReference type="InterPro" id="IPR007237">
    <property type="entry name" value="CD20-like"/>
</dbReference>
<dbReference type="InterPro" id="IPR030417">
    <property type="entry name" value="MS4A"/>
</dbReference>
<dbReference type="PANTHER" id="PTHR23320:SF96">
    <property type="entry name" value="CHANDRA PROTEIN-RELATED"/>
    <property type="match status" value="1"/>
</dbReference>
<dbReference type="PANTHER" id="PTHR23320">
    <property type="entry name" value="MEMBRANE-SPANNING 4-DOMAINS SUBFAMILY A MS4A -RELATED"/>
    <property type="match status" value="1"/>
</dbReference>
<dbReference type="Pfam" id="PF04103">
    <property type="entry name" value="CD20"/>
    <property type="match status" value="1"/>
</dbReference>
<protein>
    <recommendedName>
        <fullName>Membrane-spanning 4-domains subfamily A member 4D</fullName>
    </recommendedName>
</protein>
<proteinExistence type="evidence at transcript level"/>
<evidence type="ECO:0000255" key="1"/>
<evidence type="ECO:0000305" key="2"/>
<accession>Q99N05</accession>
<comment type="function">
    <text>May be involved in signal transduction as a component of a multimeric receptor complex.</text>
</comment>
<comment type="subcellular location">
    <subcellularLocation>
        <location>Membrane</location>
        <topology>Multi-pass membrane protein</topology>
    </subcellularLocation>
</comment>
<comment type="tissue specificity">
    <text>Expressed in thymus, spleen, peripheral lymph node, liver, kidney, heart, colon, lung, and testes.</text>
</comment>
<comment type="similarity">
    <text evidence="2">Belongs to the MS4A family.</text>
</comment>
<reference key="1">
    <citation type="journal article" date="2001" name="Genomics">
        <title>Identification of a CD20-, Fc-epsilon-RI-beta-, and HTm4-related gene family: sixteen new MS4A family members expressed in human and mouse.</title>
        <authorList>
            <person name="Liang Y."/>
            <person name="Tedder T.F."/>
        </authorList>
    </citation>
    <scope>NUCLEOTIDE SEQUENCE [MRNA]</scope>
    <source>
        <tissue>Lung</tissue>
    </source>
</reference>
<reference key="2">
    <citation type="journal article" date="2004" name="Genome Res.">
        <title>The status, quality, and expansion of the NIH full-length cDNA project: the Mammalian Gene Collection (MGC).</title>
        <authorList>
            <consortium name="The MGC Project Team"/>
        </authorList>
    </citation>
    <scope>NUCLEOTIDE SEQUENCE [LARGE SCALE MRNA]</scope>
    <source>
        <strain>C57BL/6J</strain>
        <tissue>Embryo</tissue>
    </source>
</reference>
<feature type="chain" id="PRO_0000158635" description="Membrane-spanning 4-domains subfamily A member 4D">
    <location>
        <begin position="1"/>
        <end position="225"/>
    </location>
</feature>
<feature type="topological domain" description="Cytoplasmic" evidence="1">
    <location>
        <begin position="1"/>
        <end position="42"/>
    </location>
</feature>
<feature type="transmembrane region" description="Helical" evidence="1">
    <location>
        <begin position="43"/>
        <end position="63"/>
    </location>
</feature>
<feature type="topological domain" description="Extracellular" evidence="1">
    <location>
        <begin position="64"/>
        <end position="73"/>
    </location>
</feature>
<feature type="transmembrane region" description="Helical" evidence="1">
    <location>
        <begin position="74"/>
        <end position="94"/>
    </location>
</feature>
<feature type="topological domain" description="Cytoplasmic" evidence="1">
    <location>
        <begin position="95"/>
        <end position="113"/>
    </location>
</feature>
<feature type="transmembrane region" description="Helical" evidence="1">
    <location>
        <begin position="114"/>
        <end position="134"/>
    </location>
</feature>
<feature type="topological domain" description="Extracellular" evidence="1">
    <location>
        <begin position="135"/>
        <end position="148"/>
    </location>
</feature>
<feature type="transmembrane region" description="Helical" evidence="1">
    <location>
        <begin position="149"/>
        <end position="169"/>
    </location>
</feature>
<feature type="topological domain" description="Cytoplasmic" evidence="1">
    <location>
        <begin position="170"/>
        <end position="225"/>
    </location>
</feature>
<keyword id="KW-0472">Membrane</keyword>
<keyword id="KW-0675">Receptor</keyword>
<keyword id="KW-1185">Reference proteome</keyword>
<keyword id="KW-0812">Transmembrane</keyword>
<keyword id="KW-1133">Transmembrane helix</keyword>
<gene>
    <name type="primary">Ms4a4d</name>
</gene>
<organism>
    <name type="scientific">Mus musculus</name>
    <name type="common">Mouse</name>
    <dbReference type="NCBI Taxonomy" id="10090"/>
    <lineage>
        <taxon>Eukaryota</taxon>
        <taxon>Metazoa</taxon>
        <taxon>Chordata</taxon>
        <taxon>Craniata</taxon>
        <taxon>Vertebrata</taxon>
        <taxon>Euteleostomi</taxon>
        <taxon>Mammalia</taxon>
        <taxon>Eutheria</taxon>
        <taxon>Euarchontoglires</taxon>
        <taxon>Glires</taxon>
        <taxon>Rodentia</taxon>
        <taxon>Myomorpha</taxon>
        <taxon>Muroidea</taxon>
        <taxon>Muridae</taxon>
        <taxon>Murinae</taxon>
        <taxon>Mus</taxon>
        <taxon>Mus</taxon>
    </lineage>
</organism>
<sequence length="225" mass="23859">MQGLAQTTMAVVPGGAPPSENSVIKSQMWNKNKEKFLKGEPKVLGAIQVMIAFINFSLGIIIILNRVSERFMSVLLLAPFWGSIMFIFSGSLSIAAGVKPTKAMIISSLSVNTISSVLAVAASIIGVISVISGVFRQFRSQPAIASLDVLMTILNMLEFCIAVSVSAFGCKASCCNSSEVLVVLPSNSAVTVTAPPMILQPLPPSECQGKNVPENLYRNQPGEIV</sequence>
<name>M4A4D_MOUSE</name>